<proteinExistence type="inferred from homology"/>
<organism>
    <name type="scientific">Pelodictyon phaeoclathratiforme (strain DSM 5477 / BU-1)</name>
    <dbReference type="NCBI Taxonomy" id="324925"/>
    <lineage>
        <taxon>Bacteria</taxon>
        <taxon>Pseudomonadati</taxon>
        <taxon>Chlorobiota</taxon>
        <taxon>Chlorobiia</taxon>
        <taxon>Chlorobiales</taxon>
        <taxon>Chlorobiaceae</taxon>
        <taxon>Chlorobium/Pelodictyon group</taxon>
        <taxon>Pelodictyon</taxon>
    </lineage>
</organism>
<dbReference type="EC" id="3.5.4.19" evidence="1"/>
<dbReference type="EMBL" id="CP001110">
    <property type="protein sequence ID" value="ACF42812.1"/>
    <property type="molecule type" value="Genomic_DNA"/>
</dbReference>
<dbReference type="RefSeq" id="WP_012507307.1">
    <property type="nucleotide sequence ID" value="NC_011060.1"/>
</dbReference>
<dbReference type="SMR" id="B4SCX8"/>
<dbReference type="STRING" id="324925.Ppha_0486"/>
<dbReference type="KEGG" id="pph:Ppha_0486"/>
<dbReference type="eggNOG" id="COG0139">
    <property type="taxonomic scope" value="Bacteria"/>
</dbReference>
<dbReference type="HOGENOM" id="CLU_048577_5_0_10"/>
<dbReference type="OrthoDB" id="9795769at2"/>
<dbReference type="UniPathway" id="UPA00031">
    <property type="reaction ID" value="UER00008"/>
</dbReference>
<dbReference type="Proteomes" id="UP000002724">
    <property type="component" value="Chromosome"/>
</dbReference>
<dbReference type="GO" id="GO:0005737">
    <property type="term" value="C:cytoplasm"/>
    <property type="evidence" value="ECO:0007669"/>
    <property type="project" value="UniProtKB-SubCell"/>
</dbReference>
<dbReference type="GO" id="GO:0000287">
    <property type="term" value="F:magnesium ion binding"/>
    <property type="evidence" value="ECO:0007669"/>
    <property type="project" value="UniProtKB-UniRule"/>
</dbReference>
<dbReference type="GO" id="GO:0004635">
    <property type="term" value="F:phosphoribosyl-AMP cyclohydrolase activity"/>
    <property type="evidence" value="ECO:0007669"/>
    <property type="project" value="UniProtKB-UniRule"/>
</dbReference>
<dbReference type="GO" id="GO:0008270">
    <property type="term" value="F:zinc ion binding"/>
    <property type="evidence" value="ECO:0007669"/>
    <property type="project" value="UniProtKB-UniRule"/>
</dbReference>
<dbReference type="GO" id="GO:0000105">
    <property type="term" value="P:L-histidine biosynthetic process"/>
    <property type="evidence" value="ECO:0007669"/>
    <property type="project" value="UniProtKB-UniRule"/>
</dbReference>
<dbReference type="FunFam" id="3.10.20.810:FF:000001">
    <property type="entry name" value="Histidine biosynthesis bifunctional protein HisIE"/>
    <property type="match status" value="1"/>
</dbReference>
<dbReference type="Gene3D" id="3.10.20.810">
    <property type="entry name" value="Phosphoribosyl-AMP cyclohydrolase"/>
    <property type="match status" value="1"/>
</dbReference>
<dbReference type="HAMAP" id="MF_01021">
    <property type="entry name" value="HisI"/>
    <property type="match status" value="1"/>
</dbReference>
<dbReference type="InterPro" id="IPR026660">
    <property type="entry name" value="PRA-CH"/>
</dbReference>
<dbReference type="InterPro" id="IPR002496">
    <property type="entry name" value="PRib_AMP_CycHydrolase_dom"/>
</dbReference>
<dbReference type="InterPro" id="IPR038019">
    <property type="entry name" value="PRib_AMP_CycHydrolase_sf"/>
</dbReference>
<dbReference type="NCBIfam" id="NF000768">
    <property type="entry name" value="PRK00051.1"/>
    <property type="match status" value="1"/>
</dbReference>
<dbReference type="PANTHER" id="PTHR42945">
    <property type="entry name" value="HISTIDINE BIOSYNTHESIS BIFUNCTIONAL PROTEIN"/>
    <property type="match status" value="1"/>
</dbReference>
<dbReference type="PANTHER" id="PTHR42945:SF1">
    <property type="entry name" value="HISTIDINE BIOSYNTHESIS BIFUNCTIONAL PROTEIN HIS7"/>
    <property type="match status" value="1"/>
</dbReference>
<dbReference type="Pfam" id="PF01502">
    <property type="entry name" value="PRA-CH"/>
    <property type="match status" value="1"/>
</dbReference>
<dbReference type="SUPFAM" id="SSF141734">
    <property type="entry name" value="HisI-like"/>
    <property type="match status" value="1"/>
</dbReference>
<gene>
    <name evidence="1" type="primary">hisI</name>
    <name type="ordered locus">Ppha_0486</name>
</gene>
<sequence length="137" mass="15497">MGDNQDMGKSFLETVKFDDRGLVPAIVQDQETGKVLMMAWMNLESLQMTLDKKRACYWSRSRNKLWLKGESSGNMQVVHDILIDCDGDTLLLKVSQTGGACHVGYHSCFYRKATEALSMEICDTLMFNPEDVYGKKS</sequence>
<accession>B4SCX8</accession>
<comment type="function">
    <text evidence="1">Catalyzes the hydrolysis of the adenine ring of phosphoribosyl-AMP.</text>
</comment>
<comment type="catalytic activity">
    <reaction evidence="1">
        <text>1-(5-phospho-beta-D-ribosyl)-5'-AMP + H2O = 1-(5-phospho-beta-D-ribosyl)-5-[(5-phospho-beta-D-ribosylamino)methylideneamino]imidazole-4-carboxamide</text>
        <dbReference type="Rhea" id="RHEA:20049"/>
        <dbReference type="ChEBI" id="CHEBI:15377"/>
        <dbReference type="ChEBI" id="CHEBI:58435"/>
        <dbReference type="ChEBI" id="CHEBI:59457"/>
        <dbReference type="EC" id="3.5.4.19"/>
    </reaction>
</comment>
<comment type="cofactor">
    <cofactor evidence="1">
        <name>Mg(2+)</name>
        <dbReference type="ChEBI" id="CHEBI:18420"/>
    </cofactor>
    <text evidence="1">Binds 1 Mg(2+) ion per subunit.</text>
</comment>
<comment type="cofactor">
    <cofactor evidence="1">
        <name>Zn(2+)</name>
        <dbReference type="ChEBI" id="CHEBI:29105"/>
    </cofactor>
    <text evidence="1">Binds 1 zinc ion per subunit.</text>
</comment>
<comment type="pathway">
    <text evidence="1">Amino-acid biosynthesis; L-histidine biosynthesis; L-histidine from 5-phospho-alpha-D-ribose 1-diphosphate: step 3/9.</text>
</comment>
<comment type="subunit">
    <text evidence="1">Homodimer.</text>
</comment>
<comment type="subcellular location">
    <subcellularLocation>
        <location evidence="1">Cytoplasm</location>
    </subcellularLocation>
</comment>
<comment type="similarity">
    <text evidence="1">Belongs to the PRA-CH family.</text>
</comment>
<keyword id="KW-0028">Amino-acid biosynthesis</keyword>
<keyword id="KW-0963">Cytoplasm</keyword>
<keyword id="KW-0368">Histidine biosynthesis</keyword>
<keyword id="KW-0378">Hydrolase</keyword>
<keyword id="KW-0460">Magnesium</keyword>
<keyword id="KW-0479">Metal-binding</keyword>
<keyword id="KW-1185">Reference proteome</keyword>
<keyword id="KW-0862">Zinc</keyword>
<name>HIS3_PELPB</name>
<evidence type="ECO:0000255" key="1">
    <source>
        <dbReference type="HAMAP-Rule" id="MF_01021"/>
    </source>
</evidence>
<protein>
    <recommendedName>
        <fullName evidence="1">Phosphoribosyl-AMP cyclohydrolase</fullName>
        <shortName evidence="1">PRA-CH</shortName>
        <ecNumber evidence="1">3.5.4.19</ecNumber>
    </recommendedName>
</protein>
<reference key="1">
    <citation type="submission" date="2008-06" db="EMBL/GenBank/DDBJ databases">
        <title>Complete sequence of Pelodictyon phaeoclathratiforme BU-1.</title>
        <authorList>
            <consortium name="US DOE Joint Genome Institute"/>
            <person name="Lucas S."/>
            <person name="Copeland A."/>
            <person name="Lapidus A."/>
            <person name="Glavina del Rio T."/>
            <person name="Dalin E."/>
            <person name="Tice H."/>
            <person name="Bruce D."/>
            <person name="Goodwin L."/>
            <person name="Pitluck S."/>
            <person name="Schmutz J."/>
            <person name="Larimer F."/>
            <person name="Land M."/>
            <person name="Hauser L."/>
            <person name="Kyrpides N."/>
            <person name="Mikhailova N."/>
            <person name="Liu Z."/>
            <person name="Li T."/>
            <person name="Zhao F."/>
            <person name="Overmann J."/>
            <person name="Bryant D.A."/>
            <person name="Richardson P."/>
        </authorList>
    </citation>
    <scope>NUCLEOTIDE SEQUENCE [LARGE SCALE GENOMIC DNA]</scope>
    <source>
        <strain>DSM 5477 / BU-1</strain>
    </source>
</reference>
<feature type="chain" id="PRO_1000135358" description="Phosphoribosyl-AMP cyclohydrolase">
    <location>
        <begin position="1"/>
        <end position="137"/>
    </location>
</feature>
<feature type="binding site" evidence="1">
    <location>
        <position position="84"/>
    </location>
    <ligand>
        <name>Mg(2+)</name>
        <dbReference type="ChEBI" id="CHEBI:18420"/>
    </ligand>
</feature>
<feature type="binding site" evidence="1">
    <location>
        <position position="85"/>
    </location>
    <ligand>
        <name>Zn(2+)</name>
        <dbReference type="ChEBI" id="CHEBI:29105"/>
        <note>ligand shared between dimeric partners</note>
    </ligand>
</feature>
<feature type="binding site" evidence="1">
    <location>
        <position position="86"/>
    </location>
    <ligand>
        <name>Mg(2+)</name>
        <dbReference type="ChEBI" id="CHEBI:18420"/>
    </ligand>
</feature>
<feature type="binding site" evidence="1">
    <location>
        <position position="88"/>
    </location>
    <ligand>
        <name>Mg(2+)</name>
        <dbReference type="ChEBI" id="CHEBI:18420"/>
    </ligand>
</feature>
<feature type="binding site" evidence="1">
    <location>
        <position position="101"/>
    </location>
    <ligand>
        <name>Zn(2+)</name>
        <dbReference type="ChEBI" id="CHEBI:29105"/>
        <note>ligand shared between dimeric partners</note>
    </ligand>
</feature>
<feature type="binding site" evidence="1">
    <location>
        <position position="108"/>
    </location>
    <ligand>
        <name>Zn(2+)</name>
        <dbReference type="ChEBI" id="CHEBI:29105"/>
        <note>ligand shared between dimeric partners</note>
    </ligand>
</feature>